<reference key="1">
    <citation type="journal article" date="2003" name="Mol. Biol. Evol.">
        <title>Analysis of the Amborella trichopoda chloroplast genome sequence suggests that Amborella is not a basal angiosperm.</title>
        <authorList>
            <person name="Goremykin V.V."/>
            <person name="Hirsch-Ernst K.I."/>
            <person name="Wolfl S."/>
            <person name="Hellwig F.H."/>
        </authorList>
    </citation>
    <scope>NUCLEOTIDE SEQUENCE [LARGE SCALE GENOMIC DNA]</scope>
</reference>
<name>RR4_AMBTC</name>
<keyword id="KW-0150">Chloroplast</keyword>
<keyword id="KW-0934">Plastid</keyword>
<keyword id="KW-1185">Reference proteome</keyword>
<keyword id="KW-0687">Ribonucleoprotein</keyword>
<keyword id="KW-0689">Ribosomal protein</keyword>
<keyword id="KW-0694">RNA-binding</keyword>
<keyword id="KW-0699">rRNA-binding</keyword>
<sequence>MSRYRGPRFKKIRRLGALPGLTSKRPRSGSDLRNQSRSGKRSQYRIRLEEKQKLRFHYGLTERQLLRYVRIAGKAKGSTGQVLLQLLEMRLDNILFRLGMASTIPGARQLVNHRHILVNGRLVDIPSYRCKPGDFVTTREKERSRALIQNHMNSSPNEELPKHLTLYSLQYKGLVNQIIDSKWIGLKINELLVVEYYSRQT</sequence>
<accession>Q70Y01</accession>
<proteinExistence type="inferred from homology"/>
<geneLocation type="chloroplast"/>
<dbReference type="EMBL" id="AJ506156">
    <property type="protein sequence ID" value="CAD45109.1"/>
    <property type="molecule type" value="Genomic_DNA"/>
</dbReference>
<dbReference type="RefSeq" id="NP_904101.1">
    <property type="nucleotide sequence ID" value="NC_005086.1"/>
</dbReference>
<dbReference type="SMR" id="Q70Y01"/>
<dbReference type="STRING" id="13333.Q70Y01"/>
<dbReference type="GeneID" id="2546563"/>
<dbReference type="KEGG" id="atr:2546563"/>
<dbReference type="OrthoDB" id="2443at2759"/>
<dbReference type="Proteomes" id="UP000017836">
    <property type="component" value="Chloroplast"/>
</dbReference>
<dbReference type="GO" id="GO:0009507">
    <property type="term" value="C:chloroplast"/>
    <property type="evidence" value="ECO:0007669"/>
    <property type="project" value="UniProtKB-SubCell"/>
</dbReference>
<dbReference type="GO" id="GO:0015935">
    <property type="term" value="C:small ribosomal subunit"/>
    <property type="evidence" value="ECO:0000318"/>
    <property type="project" value="GO_Central"/>
</dbReference>
<dbReference type="GO" id="GO:0019843">
    <property type="term" value="F:rRNA binding"/>
    <property type="evidence" value="ECO:0000318"/>
    <property type="project" value="GO_Central"/>
</dbReference>
<dbReference type="GO" id="GO:0003735">
    <property type="term" value="F:structural constituent of ribosome"/>
    <property type="evidence" value="ECO:0000318"/>
    <property type="project" value="GO_Central"/>
</dbReference>
<dbReference type="GO" id="GO:0042274">
    <property type="term" value="P:ribosomal small subunit biogenesis"/>
    <property type="evidence" value="ECO:0000318"/>
    <property type="project" value="GO_Central"/>
</dbReference>
<dbReference type="GO" id="GO:0006412">
    <property type="term" value="P:translation"/>
    <property type="evidence" value="ECO:0007669"/>
    <property type="project" value="UniProtKB-UniRule"/>
</dbReference>
<dbReference type="CDD" id="cd00165">
    <property type="entry name" value="S4"/>
    <property type="match status" value="1"/>
</dbReference>
<dbReference type="FunFam" id="1.10.1050.10:FF:000002">
    <property type="entry name" value="30S ribosomal protein S4, chloroplastic"/>
    <property type="match status" value="1"/>
</dbReference>
<dbReference type="FunFam" id="3.10.290.10:FF:000081">
    <property type="entry name" value="30S ribosomal protein S4, chloroplastic"/>
    <property type="match status" value="1"/>
</dbReference>
<dbReference type="Gene3D" id="1.10.1050.10">
    <property type="entry name" value="Ribosomal Protein S4 Delta 41, Chain A, domain 1"/>
    <property type="match status" value="1"/>
</dbReference>
<dbReference type="Gene3D" id="3.10.290.10">
    <property type="entry name" value="RNA-binding S4 domain"/>
    <property type="match status" value="1"/>
</dbReference>
<dbReference type="HAMAP" id="MF_01306_B">
    <property type="entry name" value="Ribosomal_uS4_B"/>
    <property type="match status" value="1"/>
</dbReference>
<dbReference type="InterPro" id="IPR022801">
    <property type="entry name" value="Ribosomal_uS4"/>
</dbReference>
<dbReference type="InterPro" id="IPR005709">
    <property type="entry name" value="Ribosomal_uS4_bac-type"/>
</dbReference>
<dbReference type="InterPro" id="IPR018079">
    <property type="entry name" value="Ribosomal_uS4_CS"/>
</dbReference>
<dbReference type="InterPro" id="IPR001912">
    <property type="entry name" value="Ribosomal_uS4_N"/>
</dbReference>
<dbReference type="InterPro" id="IPR002942">
    <property type="entry name" value="S4_RNA-bd"/>
</dbReference>
<dbReference type="InterPro" id="IPR036986">
    <property type="entry name" value="S4_RNA-bd_sf"/>
</dbReference>
<dbReference type="NCBIfam" id="NF003717">
    <property type="entry name" value="PRK05327.1"/>
    <property type="match status" value="1"/>
</dbReference>
<dbReference type="NCBIfam" id="TIGR01017">
    <property type="entry name" value="rpsD_bact"/>
    <property type="match status" value="1"/>
</dbReference>
<dbReference type="PANTHER" id="PTHR11831">
    <property type="entry name" value="30S 40S RIBOSOMAL PROTEIN"/>
    <property type="match status" value="1"/>
</dbReference>
<dbReference type="PANTHER" id="PTHR11831:SF4">
    <property type="entry name" value="SMALL RIBOSOMAL SUBUNIT PROTEIN US4M"/>
    <property type="match status" value="1"/>
</dbReference>
<dbReference type="Pfam" id="PF00163">
    <property type="entry name" value="Ribosomal_S4"/>
    <property type="match status" value="1"/>
</dbReference>
<dbReference type="Pfam" id="PF01479">
    <property type="entry name" value="S4"/>
    <property type="match status" value="1"/>
</dbReference>
<dbReference type="SMART" id="SM01390">
    <property type="entry name" value="Ribosomal_S4"/>
    <property type="match status" value="1"/>
</dbReference>
<dbReference type="SMART" id="SM00363">
    <property type="entry name" value="S4"/>
    <property type="match status" value="1"/>
</dbReference>
<dbReference type="SUPFAM" id="SSF55174">
    <property type="entry name" value="Alpha-L RNA-binding motif"/>
    <property type="match status" value="1"/>
</dbReference>
<dbReference type="PROSITE" id="PS00632">
    <property type="entry name" value="RIBOSOMAL_S4"/>
    <property type="match status" value="1"/>
</dbReference>
<dbReference type="PROSITE" id="PS50889">
    <property type="entry name" value="S4"/>
    <property type="match status" value="1"/>
</dbReference>
<gene>
    <name type="primary">rps4</name>
</gene>
<organism>
    <name type="scientific">Amborella trichopoda</name>
    <dbReference type="NCBI Taxonomy" id="13333"/>
    <lineage>
        <taxon>Eukaryota</taxon>
        <taxon>Viridiplantae</taxon>
        <taxon>Streptophyta</taxon>
        <taxon>Embryophyta</taxon>
        <taxon>Tracheophyta</taxon>
        <taxon>Spermatophyta</taxon>
        <taxon>Magnoliopsida</taxon>
        <taxon>Amborellales</taxon>
        <taxon>Amborellaceae</taxon>
        <taxon>Amborella</taxon>
    </lineage>
</organism>
<comment type="function">
    <text evidence="1">One of the primary rRNA binding proteins, it binds directly to 16S rRNA where it nucleates assembly of the body of the 30S subunit.</text>
</comment>
<comment type="function">
    <text evidence="1">With S5 and S12 plays an important role in translational accuracy.</text>
</comment>
<comment type="subunit">
    <text evidence="1">Part of the 30S ribosomal subunit. Contacts protein S5. The interaction surface between S4 and S5 is involved in control of translational fidelity (By similarity).</text>
</comment>
<comment type="subcellular location">
    <subcellularLocation>
        <location>Plastid</location>
        <location>Chloroplast</location>
    </subcellularLocation>
</comment>
<comment type="similarity">
    <text evidence="3">Belongs to the universal ribosomal protein uS4 family.</text>
</comment>
<protein>
    <recommendedName>
        <fullName evidence="3">Small ribosomal subunit protein uS4c</fullName>
    </recommendedName>
    <alternativeName>
        <fullName>30S ribosomal protein S4, chloroplastic</fullName>
    </alternativeName>
</protein>
<feature type="chain" id="PRO_0000132530" description="Small ribosomal subunit protein uS4c">
    <location>
        <begin position="1"/>
        <end position="201"/>
    </location>
</feature>
<feature type="domain" description="S4 RNA-binding">
    <location>
        <begin position="89"/>
        <end position="150"/>
    </location>
</feature>
<feature type="region of interest" description="Disordered" evidence="2">
    <location>
        <begin position="15"/>
        <end position="43"/>
    </location>
</feature>
<evidence type="ECO:0000250" key="1"/>
<evidence type="ECO:0000256" key="2">
    <source>
        <dbReference type="SAM" id="MobiDB-lite"/>
    </source>
</evidence>
<evidence type="ECO:0000305" key="3"/>